<feature type="chain" id="PRO_1000016608" description="tRNA uridine 5-carboxymethylaminomethyl modification enzyme MnmG">
    <location>
        <begin position="1"/>
        <end position="629"/>
    </location>
</feature>
<feature type="binding site" evidence="1">
    <location>
        <begin position="13"/>
        <end position="18"/>
    </location>
    <ligand>
        <name>FAD</name>
        <dbReference type="ChEBI" id="CHEBI:57692"/>
    </ligand>
</feature>
<feature type="binding site" evidence="1">
    <location>
        <begin position="273"/>
        <end position="287"/>
    </location>
    <ligand>
        <name>NAD(+)</name>
        <dbReference type="ChEBI" id="CHEBI:57540"/>
    </ligand>
</feature>
<organism>
    <name type="scientific">Hahella chejuensis (strain KCTC 2396)</name>
    <dbReference type="NCBI Taxonomy" id="349521"/>
    <lineage>
        <taxon>Bacteria</taxon>
        <taxon>Pseudomonadati</taxon>
        <taxon>Pseudomonadota</taxon>
        <taxon>Gammaproteobacteria</taxon>
        <taxon>Oceanospirillales</taxon>
        <taxon>Hahellaceae</taxon>
        <taxon>Hahella</taxon>
    </lineage>
</organism>
<evidence type="ECO:0000255" key="1">
    <source>
        <dbReference type="HAMAP-Rule" id="MF_00129"/>
    </source>
</evidence>
<keyword id="KW-0963">Cytoplasm</keyword>
<keyword id="KW-0274">FAD</keyword>
<keyword id="KW-0285">Flavoprotein</keyword>
<keyword id="KW-0520">NAD</keyword>
<keyword id="KW-1185">Reference proteome</keyword>
<keyword id="KW-0819">tRNA processing</keyword>
<protein>
    <recommendedName>
        <fullName evidence="1">tRNA uridine 5-carboxymethylaminomethyl modification enzyme MnmG</fullName>
    </recommendedName>
    <alternativeName>
        <fullName evidence="1">Glucose-inhibited division protein A</fullName>
    </alternativeName>
</protein>
<reference key="1">
    <citation type="journal article" date="2005" name="Nucleic Acids Res.">
        <title>Genomic blueprint of Hahella chejuensis, a marine microbe producing an algicidal agent.</title>
        <authorList>
            <person name="Jeong H."/>
            <person name="Yim J.H."/>
            <person name="Lee C."/>
            <person name="Choi S.-H."/>
            <person name="Park Y.K."/>
            <person name="Yoon S.H."/>
            <person name="Hur C.-G."/>
            <person name="Kang H.-Y."/>
            <person name="Kim D."/>
            <person name="Lee H.H."/>
            <person name="Park K.H."/>
            <person name="Park S.-H."/>
            <person name="Park H.-S."/>
            <person name="Lee H.K."/>
            <person name="Oh T.K."/>
            <person name="Kim J.F."/>
        </authorList>
    </citation>
    <scope>NUCLEOTIDE SEQUENCE [LARGE SCALE GENOMIC DNA]</scope>
    <source>
        <strain>KCTC 2396</strain>
    </source>
</reference>
<gene>
    <name evidence="1" type="primary">mnmG</name>
    <name evidence="1" type="synonym">gidA</name>
    <name type="ordered locus">HCH_07083</name>
</gene>
<comment type="function">
    <text evidence="1">NAD-binding protein involved in the addition of a carboxymethylaminomethyl (cmnm) group at the wobble position (U34) of certain tRNAs, forming tRNA-cmnm(5)s(2)U34.</text>
</comment>
<comment type="cofactor">
    <cofactor evidence="1">
        <name>FAD</name>
        <dbReference type="ChEBI" id="CHEBI:57692"/>
    </cofactor>
</comment>
<comment type="subunit">
    <text evidence="1">Homodimer. Heterotetramer of two MnmE and two MnmG subunits.</text>
</comment>
<comment type="subcellular location">
    <subcellularLocation>
        <location evidence="1">Cytoplasm</location>
    </subcellularLocation>
</comment>
<comment type="similarity">
    <text evidence="1">Belongs to the MnmG family.</text>
</comment>
<name>MNMG_HAHCH</name>
<dbReference type="EMBL" id="CP000155">
    <property type="protein sequence ID" value="ABC33695.1"/>
    <property type="molecule type" value="Genomic_DNA"/>
</dbReference>
<dbReference type="RefSeq" id="WP_011400745.1">
    <property type="nucleotide sequence ID" value="NC_007645.1"/>
</dbReference>
<dbReference type="SMR" id="Q2S6M9"/>
<dbReference type="STRING" id="349521.HCH_07083"/>
<dbReference type="KEGG" id="hch:HCH_07083"/>
<dbReference type="eggNOG" id="COG0445">
    <property type="taxonomic scope" value="Bacteria"/>
</dbReference>
<dbReference type="HOGENOM" id="CLU_007831_2_2_6"/>
<dbReference type="OrthoDB" id="9815560at2"/>
<dbReference type="Proteomes" id="UP000000238">
    <property type="component" value="Chromosome"/>
</dbReference>
<dbReference type="GO" id="GO:0005829">
    <property type="term" value="C:cytosol"/>
    <property type="evidence" value="ECO:0007669"/>
    <property type="project" value="TreeGrafter"/>
</dbReference>
<dbReference type="GO" id="GO:0050660">
    <property type="term" value="F:flavin adenine dinucleotide binding"/>
    <property type="evidence" value="ECO:0007669"/>
    <property type="project" value="UniProtKB-UniRule"/>
</dbReference>
<dbReference type="GO" id="GO:0030488">
    <property type="term" value="P:tRNA methylation"/>
    <property type="evidence" value="ECO:0007669"/>
    <property type="project" value="TreeGrafter"/>
</dbReference>
<dbReference type="GO" id="GO:0002098">
    <property type="term" value="P:tRNA wobble uridine modification"/>
    <property type="evidence" value="ECO:0007669"/>
    <property type="project" value="InterPro"/>
</dbReference>
<dbReference type="FunFam" id="1.10.10.1800:FF:000001">
    <property type="entry name" value="tRNA uridine 5-carboxymethylaminomethyl modification enzyme MnmG"/>
    <property type="match status" value="1"/>
</dbReference>
<dbReference type="FunFam" id="1.10.150.570:FF:000001">
    <property type="entry name" value="tRNA uridine 5-carboxymethylaminomethyl modification enzyme MnmG"/>
    <property type="match status" value="1"/>
</dbReference>
<dbReference type="FunFam" id="3.50.50.60:FF:000002">
    <property type="entry name" value="tRNA uridine 5-carboxymethylaminomethyl modification enzyme MnmG"/>
    <property type="match status" value="1"/>
</dbReference>
<dbReference type="FunFam" id="3.50.50.60:FF:000010">
    <property type="entry name" value="tRNA uridine 5-carboxymethylaminomethyl modification enzyme MnmG"/>
    <property type="match status" value="1"/>
</dbReference>
<dbReference type="Gene3D" id="3.50.50.60">
    <property type="entry name" value="FAD/NAD(P)-binding domain"/>
    <property type="match status" value="2"/>
</dbReference>
<dbReference type="Gene3D" id="1.10.150.570">
    <property type="entry name" value="GidA associated domain, C-terminal subdomain"/>
    <property type="match status" value="1"/>
</dbReference>
<dbReference type="Gene3D" id="1.10.10.1800">
    <property type="entry name" value="tRNA uridine 5-carboxymethylaminomethyl modification enzyme MnmG/GidA"/>
    <property type="match status" value="1"/>
</dbReference>
<dbReference type="HAMAP" id="MF_00129">
    <property type="entry name" value="MnmG_GidA"/>
    <property type="match status" value="1"/>
</dbReference>
<dbReference type="InterPro" id="IPR036188">
    <property type="entry name" value="FAD/NAD-bd_sf"/>
</dbReference>
<dbReference type="InterPro" id="IPR049312">
    <property type="entry name" value="GIDA_C_N"/>
</dbReference>
<dbReference type="InterPro" id="IPR004416">
    <property type="entry name" value="MnmG"/>
</dbReference>
<dbReference type="InterPro" id="IPR002218">
    <property type="entry name" value="MnmG-rel"/>
</dbReference>
<dbReference type="InterPro" id="IPR020595">
    <property type="entry name" value="MnmG-rel_CS"/>
</dbReference>
<dbReference type="InterPro" id="IPR026904">
    <property type="entry name" value="MnmG_C"/>
</dbReference>
<dbReference type="InterPro" id="IPR047001">
    <property type="entry name" value="MnmG_C_subdom"/>
</dbReference>
<dbReference type="InterPro" id="IPR044920">
    <property type="entry name" value="MnmG_C_subdom_sf"/>
</dbReference>
<dbReference type="InterPro" id="IPR040131">
    <property type="entry name" value="MnmG_N"/>
</dbReference>
<dbReference type="NCBIfam" id="TIGR00136">
    <property type="entry name" value="mnmG_gidA"/>
    <property type="match status" value="1"/>
</dbReference>
<dbReference type="PANTHER" id="PTHR11806">
    <property type="entry name" value="GLUCOSE INHIBITED DIVISION PROTEIN A"/>
    <property type="match status" value="1"/>
</dbReference>
<dbReference type="PANTHER" id="PTHR11806:SF0">
    <property type="entry name" value="PROTEIN MTO1 HOMOLOG, MITOCHONDRIAL"/>
    <property type="match status" value="1"/>
</dbReference>
<dbReference type="Pfam" id="PF01134">
    <property type="entry name" value="GIDA"/>
    <property type="match status" value="1"/>
</dbReference>
<dbReference type="Pfam" id="PF21680">
    <property type="entry name" value="GIDA_C_1st"/>
    <property type="match status" value="1"/>
</dbReference>
<dbReference type="Pfam" id="PF13932">
    <property type="entry name" value="SAM_GIDA_C"/>
    <property type="match status" value="1"/>
</dbReference>
<dbReference type="SMART" id="SM01228">
    <property type="entry name" value="GIDA_assoc_3"/>
    <property type="match status" value="1"/>
</dbReference>
<dbReference type="SUPFAM" id="SSF51905">
    <property type="entry name" value="FAD/NAD(P)-binding domain"/>
    <property type="match status" value="1"/>
</dbReference>
<dbReference type="PROSITE" id="PS01280">
    <property type="entry name" value="GIDA_1"/>
    <property type="match status" value="1"/>
</dbReference>
<dbReference type="PROSITE" id="PS01281">
    <property type="entry name" value="GIDA_2"/>
    <property type="match status" value="1"/>
</dbReference>
<accession>Q2S6M9</accession>
<sequence length="629" mass="69816">MDFPKSFDVIVIGGGHAGTEAALAAARMGSQTLLLTHNIETLGQMSCNPAIGGIGKSHLVKEVDALGGAMALATDRAGIQFRVLNSRKGPAVRATRAQADRALYKAAIREILENQPNLTIFQQAADDLIMQGDHVAGVVTQMGLRFHSKTVVLTTGTFLGGVIHIGLENHSGGRAGDPPSIALAKRLREMPFRVGRLKTGTPPRIDARSVDFSVMEAQPGDTPIPVMSFMGSVDLHPHQVNCFITRTNERTHEIIRGGMDRSPMYTGVIEGVGPRYCPSIEDKVNRFSDKDSHQVFIEPEGLSTHELYPNGISTSLPFDVQLQLVHSIQGMENAHITRPGYAIEYDFFNPQDLKHSLETKFVGSLFFAGQINGTTGYEEAAAQGLLAGMNAALRAQEKEAWSPRRDEAYIGVLVDDLITMGTREPYRMFTSRAEYRLLLREDNADLRLTEKGRELGMIDDERWRVFCEKREAIAREQQRLKSIWIQPATEKARKAAELLETELTREYSLHDLLKRPEMTWEKLSLLDADVAATPYEVAEQLEIQVKYAGYIDRQQEEIERLRRNENMALPADLDYSGIQGLSNEIKQKLTEVRPETLAQASRIPGVTPAAVSLLLVHLKKRGSLQRKSA</sequence>
<proteinExistence type="inferred from homology"/>